<evidence type="ECO:0000250" key="1"/>
<evidence type="ECO:0000250" key="2">
    <source>
        <dbReference type="UniProtKB" id="P03396"/>
    </source>
</evidence>
<evidence type="ECO:0000255" key="3"/>
<evidence type="ECO:0000269" key="4">
    <source>
    </source>
</evidence>
<evidence type="ECO:0000269" key="5">
    <source>
    </source>
</evidence>
<evidence type="ECO:0000269" key="6">
    <source>
    </source>
</evidence>
<evidence type="ECO:0000269" key="7">
    <source>
    </source>
</evidence>
<evidence type="ECO:0000269" key="8">
    <source>
    </source>
</evidence>
<evidence type="ECO:0000269" key="9">
    <source>
    </source>
</evidence>
<evidence type="ECO:0000303" key="10">
    <source>
    </source>
</evidence>
<evidence type="ECO:0000305" key="11"/>
<evidence type="ECO:0000305" key="12">
    <source>
    </source>
</evidence>
<evidence type="ECO:0007744" key="13">
    <source>
        <dbReference type="PDB" id="4JPR"/>
    </source>
</evidence>
<evidence type="ECO:0007744" key="14">
    <source>
        <dbReference type="PDB" id="5H9C"/>
    </source>
</evidence>
<keyword id="KW-0002">3D-structure</keyword>
<keyword id="KW-0165">Cleavage on pair of basic residues</keyword>
<keyword id="KW-0175">Coiled coil</keyword>
<keyword id="KW-1015">Disulfide bond</keyword>
<keyword id="KW-1169">Fusion of virus membrane with host cell membrane</keyword>
<keyword id="KW-1168">Fusion of virus membrane with host membrane</keyword>
<keyword id="KW-0325">Glycoprotein</keyword>
<keyword id="KW-1032">Host cell membrane</keyword>
<keyword id="KW-1043">Host membrane</keyword>
<keyword id="KW-0945">Host-virus interaction</keyword>
<keyword id="KW-0449">Lipoprotein</keyword>
<keyword id="KW-0472">Membrane</keyword>
<keyword id="KW-0564">Palmitate</keyword>
<keyword id="KW-1185">Reference proteome</keyword>
<keyword id="KW-0732">Signal</keyword>
<keyword id="KW-0812">Transmembrane</keyword>
<keyword id="KW-1133">Transmembrane helix</keyword>
<keyword id="KW-1161">Viral attachment to host cell</keyword>
<keyword id="KW-1234">Viral attachment to host entry receptor</keyword>
<keyword id="KW-0261">Viral envelope protein</keyword>
<keyword id="KW-1162">Viral penetration into host cytoplasm</keyword>
<keyword id="KW-0946">Virion</keyword>
<keyword id="KW-1160">Virus entry into host cell</keyword>
<dbReference type="EMBL" id="M37980">
    <property type="protein sequence ID" value="AAA91268.1"/>
    <property type="molecule type" value="Genomic_RNA"/>
</dbReference>
<dbReference type="PIR" id="S35427">
    <property type="entry name" value="S35427"/>
</dbReference>
<dbReference type="RefSeq" id="NP_040548.1">
    <property type="nucleotide sequence ID" value="NC_001408.1"/>
</dbReference>
<dbReference type="PDB" id="4JPR">
    <property type="method" value="X-ray"/>
    <property type="resolution" value="2.00 A"/>
    <property type="chains" value="A=452-522"/>
</dbReference>
<dbReference type="PDB" id="5H9C">
    <property type="method" value="X-ray"/>
    <property type="resolution" value="1.78 A"/>
    <property type="chains" value="A=452-522"/>
</dbReference>
<dbReference type="PDBsum" id="4JPR"/>
<dbReference type="PDBsum" id="5H9C"/>
<dbReference type="SMR" id="P0DTM4"/>
<dbReference type="GeneID" id="1491907"/>
<dbReference type="KEGG" id="vg:1491907"/>
<dbReference type="OrthoDB" id="30273at10239"/>
<dbReference type="Proteomes" id="UP000002238">
    <property type="component" value="Genome"/>
</dbReference>
<dbReference type="GO" id="GO:0020002">
    <property type="term" value="C:host cell plasma membrane"/>
    <property type="evidence" value="ECO:0007669"/>
    <property type="project" value="UniProtKB-SubCell"/>
</dbReference>
<dbReference type="GO" id="GO:0016020">
    <property type="term" value="C:membrane"/>
    <property type="evidence" value="ECO:0007669"/>
    <property type="project" value="UniProtKB-KW"/>
</dbReference>
<dbReference type="GO" id="GO:0019031">
    <property type="term" value="C:viral envelope"/>
    <property type="evidence" value="ECO:0007669"/>
    <property type="project" value="UniProtKB-KW"/>
</dbReference>
<dbReference type="GO" id="GO:0055036">
    <property type="term" value="C:virion membrane"/>
    <property type="evidence" value="ECO:0007669"/>
    <property type="project" value="UniProtKB-SubCell"/>
</dbReference>
<dbReference type="GO" id="GO:0098670">
    <property type="term" value="P:entry receptor-mediated virion attachment to host cell"/>
    <property type="evidence" value="ECO:0007669"/>
    <property type="project" value="UniProtKB-KW"/>
</dbReference>
<dbReference type="GO" id="GO:0019064">
    <property type="term" value="P:fusion of virus membrane with host plasma membrane"/>
    <property type="evidence" value="ECO:0007669"/>
    <property type="project" value="UniProtKB-KW"/>
</dbReference>
<dbReference type="GO" id="GO:0046718">
    <property type="term" value="P:symbiont entry into host cell"/>
    <property type="evidence" value="ECO:0007669"/>
    <property type="project" value="UniProtKB-KW"/>
</dbReference>
<dbReference type="CDD" id="cd09949">
    <property type="entry name" value="RSV-like_HR1-HR2"/>
    <property type="match status" value="1"/>
</dbReference>
<dbReference type="Gene3D" id="1.10.287.210">
    <property type="match status" value="1"/>
</dbReference>
<dbReference type="InterPro" id="IPR005166">
    <property type="entry name" value="RSV_p95_env"/>
</dbReference>
<dbReference type="InterPro" id="IPR018154">
    <property type="entry name" value="TLV/ENV_coat_polyprotein"/>
</dbReference>
<dbReference type="PANTHER" id="PTHR10424:SF73">
    <property type="entry name" value="ENDOGENOUS RETROVIRUS GROUP FC1 ENV POLYPROTEIN-RELATED"/>
    <property type="match status" value="1"/>
</dbReference>
<dbReference type="PANTHER" id="PTHR10424">
    <property type="entry name" value="VIRAL ENVELOPE PROTEIN"/>
    <property type="match status" value="1"/>
</dbReference>
<dbReference type="Pfam" id="PF03708">
    <property type="entry name" value="Avian_gp85"/>
    <property type="match status" value="1"/>
</dbReference>
<dbReference type="Pfam" id="PF00429">
    <property type="entry name" value="TLV_coat"/>
    <property type="match status" value="1"/>
</dbReference>
<dbReference type="SUPFAM" id="SSF58069">
    <property type="entry name" value="Virus ectodomain"/>
    <property type="match status" value="1"/>
</dbReference>
<feature type="signal peptide" evidence="3">
    <location>
        <begin position="1"/>
        <end position="62"/>
    </location>
</feature>
<feature type="chain" id="PRO_0000239600" description="Envelope glycoprotein gp95">
    <location>
        <begin position="63"/>
        <end position="606"/>
    </location>
</feature>
<feature type="chain" id="PRO_0000040799" description="Surface protein" evidence="1">
    <location>
        <begin position="63"/>
        <end position="401"/>
    </location>
</feature>
<feature type="chain" id="PRO_0000040800" description="Transmembrane protein" evidence="1">
    <location>
        <begin position="402"/>
        <end position="606"/>
    </location>
</feature>
<feature type="topological domain" description="Extracellular" evidence="3">
    <location>
        <begin position="63"/>
        <end position="552"/>
    </location>
</feature>
<feature type="transmembrane region" description="Helical" evidence="3">
    <location>
        <begin position="553"/>
        <end position="573"/>
    </location>
</feature>
<feature type="topological domain" description="Cytoplasmic" evidence="3">
    <location>
        <begin position="574"/>
        <end position="606"/>
    </location>
</feature>
<feature type="region of interest" description="Binding to host receptor" evidence="10">
    <location>
        <begin position="185"/>
        <end position="226"/>
    </location>
</feature>
<feature type="region of interest" description="Binding to host receptor" evidence="10">
    <location>
        <begin position="261"/>
        <end position="288"/>
    </location>
</feature>
<feature type="region of interest" description="Fusion peptide" evidence="4">
    <location>
        <begin position="418"/>
        <end position="438"/>
    </location>
</feature>
<feature type="region of interest" description="Immunosuppression" evidence="1">
    <location>
        <begin position="474"/>
        <end position="490"/>
    </location>
</feature>
<feature type="coiled-coil region" evidence="3">
    <location>
        <begin position="435"/>
        <end position="485"/>
    </location>
</feature>
<feature type="coiled-coil region" evidence="3">
    <location>
        <begin position="503"/>
        <end position="533"/>
    </location>
</feature>
<feature type="site" description="Cleavage; by host" evidence="2">
    <location>
        <begin position="401"/>
        <end position="402"/>
    </location>
</feature>
<feature type="lipid moiety-binding region" description="S-palmitoyl cysteine; by host" evidence="2">
    <location>
        <position position="565"/>
    </location>
</feature>
<feature type="lipid moiety-binding region" description="S-palmitoyl cysteine; by host" evidence="2">
    <location>
        <position position="568"/>
    </location>
</feature>
<feature type="glycosylation site" description="N-linked (GlcNAc...) asparagine; by host" evidence="3">
    <location>
        <position position="79"/>
    </location>
</feature>
<feature type="glycosylation site" description="N-linked (GlcNAc...) asparagine; by host" evidence="3">
    <location>
        <position position="120"/>
    </location>
</feature>
<feature type="glycosylation site" description="N-linked (GlcNAc...) asparagine; by host" evidence="3">
    <location>
        <position position="141"/>
    </location>
</feature>
<feature type="glycosylation site" description="N-linked (GlcNAc...) asparagine; by host" evidence="3">
    <location>
        <position position="158"/>
    </location>
</feature>
<feature type="glycosylation site" description="N-linked (GlcNAc...) asparagine; by host" evidence="3">
    <location>
        <position position="178"/>
    </location>
</feature>
<feature type="glycosylation site" description="N-linked (GlcNAc...) asparagine; by host" evidence="3">
    <location>
        <position position="257"/>
    </location>
</feature>
<feature type="glycosylation site" description="N-linked (GlcNAc...) asparagine; by host" evidence="3">
    <location>
        <position position="291"/>
    </location>
</feature>
<feature type="glycosylation site" description="N-linked (GlcNAc...) asparagine; by host" evidence="3">
    <location>
        <position position="297"/>
    </location>
</feature>
<feature type="glycosylation site" description="N-linked (GlcNAc...) asparagine; by host" evidence="3">
    <location>
        <position position="307"/>
    </location>
</feature>
<feature type="glycosylation site" description="N-linked (GlcNAc...) asparagine; by host" evidence="3">
    <location>
        <position position="315"/>
    </location>
</feature>
<feature type="glycosylation site" description="N-linked (GlcNAc...) asparagine; by host" evidence="3">
    <location>
        <position position="391"/>
    </location>
</feature>
<feature type="glycosylation site" description="N-linked (GlcNAc...) asparagine; by host" evidence="3">
    <location>
        <position position="453"/>
    </location>
</feature>
<feature type="glycosylation site" description="N-linked (GlcNAc...) asparagine; by host" evidence="3">
    <location>
        <position position="501"/>
    </location>
</feature>
<feature type="disulfide bond" description="Interchain" evidence="7">
    <location>
        <begin position="87"/>
        <end position="499"/>
    </location>
</feature>
<feature type="disulfide bond" evidence="7">
    <location>
        <begin position="121"/>
        <end position="152"/>
    </location>
</feature>
<feature type="disulfide bond" evidence="7">
    <location>
        <begin position="192"/>
        <end position="245"/>
    </location>
</feature>
<feature type="disulfide bond" evidence="7">
    <location>
        <begin position="258"/>
        <end position="267"/>
    </location>
</feature>
<feature type="disulfide bond" evidence="7">
    <location>
        <begin position="353"/>
        <end position="370"/>
    </location>
</feature>
<feature type="disulfide bond" evidence="7 9">
    <location>
        <begin position="410"/>
        <end position="446"/>
    </location>
</feature>
<feature type="disulfide bond" evidence="9">
    <location>
        <begin position="491"/>
        <end position="498"/>
    </location>
</feature>
<accession>P0DTM4</accession>
<accession>P03397</accession>
<accession>Q03803</accession>
<accession>Q85500</accession>
<comment type="function">
    <molecule>Surface protein</molecule>
    <text evidence="5 6 8">The surface protein (SU) attaches the virus to the host cell entry receptor TVA (PubMed:15731243, PubMed:22099981). This interaction triggers the refolding of the transmembrane protein (TM) thereby unmasking its fusion peptide and the formation of a reactive thiolate on Cys-100 to activate its fusogenic potential. Fusion occurs at the host cell plasma membrane (PubMed:18260686).</text>
</comment>
<comment type="function">
    <molecule>Transmembrane protein</molecule>
    <text evidence="11 12">The transmembrane protein (TM) acts as a class I viral fusion protein (Probable). Under the current model, the protein has at least 3 conformational states: pre-fusion native state, pre-hairpin intermediate state, and post-fusion hairpin state (Probable). During viral and target cell membrane fusion, the coiled coil regions (heptad repeats) assume a trimer-of-hairpins structure, positioning the fusion peptide in close proximity to the C-terminal region of the ectodomain. The formation of this structure appears to drive apposition and subsequent fusion of viral and target cell membranes (Probable). Membranes fusion leads to delivery of the nucleocapsid into the cytoplasm (Probable).</text>
</comment>
<comment type="subunit">
    <molecule>Surface protein</molecule>
    <text evidence="5 7 8">Heterodimer with the transmembrane protein. The mature envelope protein (Env) consists of a trimer of SU-TM heterodimers attached by a labile interchain disulfide bond (PubMed:21454567). Interacts with the host cell entry receptor TVA isoforms pg900 and pg800; this interaction allows the viral attachment (PubMed:15731243, PubMed:22099981).</text>
</comment>
<comment type="subunit">
    <molecule>Transmembrane protein</molecule>
    <text evidence="7">Heterodimer with the surface protein. The mature envelope protein (Env) consists of a trimer of SU-TM heterodimers attached by a labile interchain disulfide bond.</text>
</comment>
<comment type="subcellular location">
    <molecule>Transmembrane protein</molecule>
    <subcellularLocation>
        <location evidence="11">Virion membrane</location>
        <topology evidence="10">Single-pass type I membrane protein</topology>
    </subcellularLocation>
    <subcellularLocation>
        <location evidence="11">Host cell membrane</location>
        <topology evidence="10">Single-pass type I membrane protein</topology>
    </subcellularLocation>
</comment>
<comment type="subcellular location">
    <molecule>Surface protein</molecule>
    <subcellularLocation>
        <location evidence="11">Virion membrane</location>
        <topology>Peripheral membrane protein</topology>
    </subcellularLocation>
    <subcellularLocation>
        <location evidence="11">Host cell membrane</location>
        <topology>Peripheral membrane protein</topology>
    </subcellularLocation>
    <text evidence="1">The surface protein is not anchored to the viral envelope, but associates with the extravirion surface through its binding to TM. Both proteins are thought to be concentrated at the site of budding and incorporated into the virions possibly by contacts between the cytoplasmic tail of Env and the N-terminus of Gag (By similarity).</text>
</comment>
<comment type="domain">
    <molecule>Envelope glycoprotein gp95</molecule>
    <text evidence="1">The 17 amino acids long immunosuppressive region is present in many retroviral envelope proteins. Synthetic peptides derived from this relatively conserved sequence inhibit immune function in vitro and in vivo (By similarity).</text>
</comment>
<comment type="PTM">
    <molecule>Envelope glycoprotein gp95</molecule>
    <text evidence="1">Specific enzymatic cleavages in vivo yield mature proteins. Envelope glycoproteins are synthesized as an inactive precursor that is N-glycosylated and processed likely by host cell furin or by a furin-like protease in the Golgi to yield the mature SU and TM proteins. The cleavage site between SU and TM requires the minimal sequence [KR]-X-[KR]-R (By similarity).</text>
</comment>
<comment type="PTM">
    <molecule>Transmembrane protein</molecule>
    <text evidence="2">The transmembrane protein is palmitoylated. Palmitoylation is necessary for glycoprotein function and infectivity.</text>
</comment>
<comment type="similarity">
    <text evidence="11">Belongs to the Alpharetroviruses envelope glycoprotein family.</text>
</comment>
<organism>
    <name type="scientific">Avian leukosis virus subgroup A (isolate RSA)</name>
    <name type="common">ALV-A RSA</name>
    <dbReference type="NCBI Taxonomy" id="363745"/>
    <lineage>
        <taxon>Viruses</taxon>
        <taxon>Riboviria</taxon>
        <taxon>Pararnavirae</taxon>
        <taxon>Artverviricota</taxon>
        <taxon>Revtraviricetes</taxon>
        <taxon>Ortervirales</taxon>
        <taxon>Retroviridae</taxon>
        <taxon>Orthoretrovirinae</taxon>
        <taxon>Alpharetrovirus</taxon>
        <taxon>Avian leukosis virus</taxon>
    </lineage>
</organism>
<reference key="1">
    <citation type="journal article" date="1992" name="Nucleic Acids Res.">
        <title>Complete nucleotide sequence of a highly infectious avian leukosis virus.</title>
        <authorList>
            <person name="Bieth E."/>
            <person name="Darlix J.L."/>
        </authorList>
    </citation>
    <scope>NUCLEOTIDE SEQUENCE [GENOMIC RNA]</scope>
</reference>
<reference key="2">
    <citation type="journal article" date="2004" name="Eur. J. Biochem.">
        <title>Structure and membrane interaction of the internal fusion peptide of avian sarcoma leukosis virus.</title>
        <authorList>
            <person name="Cheng S.F."/>
            <person name="Wu C.W."/>
            <person name="Kantchev E.A."/>
            <person name="Chang D.K."/>
        </authorList>
    </citation>
    <scope>CHARACTERIZATION OF THE FUSION PEPTIDE</scope>
</reference>
<reference key="3">
    <citation type="journal article" date="2005" name="J. Virol.">
        <title>Receptor-induced conformational changes in the SU subunit of the avian sarcoma/leukosis virus A envelope protein: implications for fusion activation.</title>
        <authorList>
            <person name="Delos S.E."/>
            <person name="Godby J.A."/>
            <person name="White J.M."/>
        </authorList>
    </citation>
    <scope>FUNCTION</scope>
    <scope>INTERACTION WITH HOST RECEPTOR TVA ISOFORM PG950 (SURFACE PROTEIN)</scope>
</reference>
<reference key="4">
    <citation type="journal article" date="2007" name="PLoS Pathog.">
        <title>Receptor-induced thiolate couples Env activation to retrovirus fusion and infection.</title>
        <authorList>
            <person name="Smith J.G."/>
            <person name="Cunningham J.M."/>
        </authorList>
    </citation>
    <scope>FUNCTION (SURFACE PROTEIN)</scope>
    <scope>FUNCTION (TRANSMEMBRANE PROTEIN)</scope>
</reference>
<reference key="5">
    <citation type="journal article" date="2011" name="Retrovirology">
        <title>Binding of more than one Tva800 molecule is required for ASLV-A entry.</title>
        <authorList>
            <person name="Gray E.R."/>
            <person name="Illingworth C.J."/>
            <person name="Coffin J.M."/>
            <person name="Stoye J.P."/>
        </authorList>
    </citation>
    <scope>FUNCTION</scope>
    <scope>INTERACTION WITH HOST RECEPTOR TVA ISOFORM PG800 (SURFACE PROTEIN)</scope>
</reference>
<reference key="6">
    <citation type="journal article" date="2011" name="J. Biol. Chem.">
        <title>Simple, automated, high resolution mass spectrometry method to determine the disulfide bond and glycosylation patterns of a complex protein: subgroup A avian sarcoma and leukosis virus envelope glycoprotein.</title>
        <authorList>
            <person name="Pike G.M."/>
            <person name="Madden B.J."/>
            <person name="Melder D.C."/>
            <person name="Charlesworth M.C."/>
            <person name="Federspiel M.J."/>
        </authorList>
    </citation>
    <scope>DISULFIDE BONDS</scope>
</reference>
<reference key="7">
    <citation type="journal article" date="2019" name="Viruses">
        <title>Reverse Engineering Provides Insights on the Evolution of Subgroups A to E Avian Sarcoma and Leukosis Virus Receptor Specificity.</title>
        <authorList>
            <person name="Federspiel M.J."/>
        </authorList>
    </citation>
    <scope>REVIEW</scope>
</reference>
<reference evidence="13 14" key="8">
    <citation type="journal article" date="2013" name="FASEB J.">
        <title>Structural characterization of a fusion glycoprotein from a retrovirus that undergoes a hybrid 2-step entry mechanism.</title>
        <authorList>
            <person name="Aydin H."/>
            <person name="Smrke B.M."/>
            <person name="Lee J.E."/>
        </authorList>
    </citation>
    <scope>X-RAY CRYSTALLOGRAPHY (1.78 ANGSTROMS) OF 452-522</scope>
    <scope>DISULFIDE BONDS (TRANSMEMBRANE PROTEIN)</scope>
</reference>
<gene>
    <name type="primary">env</name>
</gene>
<name>ENV_ALVA</name>
<sequence>MEAVIKAFLTGYPGKTSKKDSKEKPLATSKKDPEKTPLLPTRVNYILIIGVLVLCEVTGVRADVHLLEQPGNLWITWANRTGQTDFCLSTQSATSPFQTCLIGIPSPISEGDFKGYVSDNCTTLGTDRLVSSADFTGGPDNSTTLTYRKVSCLLLKLNVSMWDEPHELQLLGSQSLPNITNIAQISGITGGCVGFRPQGVPWYLGWSRQEATRFLLRHPSFSKSTEPFTVVTADRHNLFMGSEYCGAYGYRFWNMYNCSQVGRQYRCGNARSPRPGLPEIQCTRRGGKWVNQSQEINESEPFSFTVNCTASSLGNASGCCGKAGTILPGKWVDSTQGSFTKPKALPPAIFLICGDRAWQGIPSRPVGGPCYLGKLTMLAPKHTDILKVLVNSSRTGIRRKRSTSHLDDTCSDEVQLWGPTARIFASILAPGVARAQALREIERLACWSVKQANLTTSFLGDLLDDVTSIRHAVLQNRAAIDFLLLAHGHGCEDVAGMCCFNLSDHSESIQKKFQLMKEHVNKIGVDSDPIGSWLRGLFGGIGEWAVHLLKGLLLGLVVILLLVVCLPCLLQIVCGNIRKMINNSISYHTEYKKLQKACGQPESRIV</sequence>
<proteinExistence type="evidence at protein level"/>
<protein>
    <recommendedName>
        <fullName>Envelope glycoprotein gp95</fullName>
    </recommendedName>
    <alternativeName>
        <fullName>Env polyprotein</fullName>
    </alternativeName>
    <component>
        <recommendedName>
            <fullName>Surface protein</fullName>
            <shortName>SU</shortName>
        </recommendedName>
        <alternativeName>
            <fullName>Glycoprotein 85</fullName>
            <shortName>gp85</shortName>
        </alternativeName>
    </component>
    <component>
        <recommendedName>
            <fullName>Transmembrane protein</fullName>
            <shortName>TM</shortName>
        </recommendedName>
        <alternativeName>
            <fullName>Glycoprotein 37</fullName>
            <shortName>gp37</shortName>
        </alternativeName>
    </component>
</protein>